<evidence type="ECO:0000255" key="1">
    <source>
        <dbReference type="HAMAP-Rule" id="MF_01321"/>
    </source>
</evidence>
<sequence>MVSLRDNIEAQPLSHNRRIRKNFGHINLVADIPNLIEIQKNSYEKNFLQLNIKDSERKNKGLQSILNSIFPISDSSNIANLEFVKYEFDTPKYDVEECSQRSLSYAAPLKVTLRLSIWDIDEDTGTREIKGIKEQEVYMGDIPLMTKNGTFIINGTERVVVSQMHRSPGVFFYHDEGKVHSSGKLLYSARVIPYRGSWLDLEFDAKDVLYFRIDRKRKLYATTLLRAIGMSTEEIIKFYYNSVTYKLVKKKGWAVKFIPKHITAHRLTSDLVDADTGNVLLKAGQKITPRLAQKYCAEGINNILVAHETLIGKYLSEDLRDPASDEVLAKIGEIITSDMLNVINDLKIKNVNVLVINPQSGPYIRNTLFADKNQDREAALCDIFRVLRPGEPTNIEAAESLFYNLFFDSERYDLSEVGRIKMNSRLGLSISEEVTVLTIDDIKNIVRVLVELKDGKGIIDDIDHLGNRRVRSVGELIENQFRIGLVRMEKSVIERMSAGDVDTVMPHDLVNSKILVSVVKEFFSTSQLSQFMDQTNPLSEITHKRRLSALGPGGLSRDRAGFEVRDVHPTHYGRICPIETPEGQNIGLINSMATYARINKHGFIESPYRKVKDGRVIDEVIYLSAIEEGKYKIGQANSKVDRDGKLQGEFINCRVEGGNFVMVEPHEVDFIDVTPMQVVSVAASLIPFLENDDANRALMGSNMQRQAVPLIKTDAPFVGTGVEGVVAKDSGASVLALHDGIVEQVDSNRIVIRTLEQKIDGSPSVYIYNLLKFQKSNHNTCINQKPLVQVGHYVKKNDIIADGPSTDNGEIALGRNVLVAFLPWNGYNFEDSILISERIVKEDIFTSIHIEEFEVIARDTRLGPEEITRDIPNVSEEALRHLDEVGIIYVGAEVKAGDILVGKVTPKSESPITPEEKLLRAIFGEKAFDVKDSSLHVPSGVSGTVVEVRVFSRRGVEKDQRAIAIEKQQIEKLAKDRDDELEIIEHFVFSLLEKLLVGQVIINGLKQVKAGQTITTEMLKGLSKGQFWQLTVEDANVMNEIEQIKIHYDEKKDALNKRFATKVEKLQSGDDLPQGALKVVKVFIATKHKLQPGDKMAGRHGNKGVVSRIVPEEDMPFLEDGTVVDIVLNPLGLPSRMNIGQILETHLGWASINLAQKISTLVKEYKNKNIGIEKIKKFLLELYGENINYILERSEEEIISFCNKVGKGVYFATPVFDGAKVQDVKDMLKLAGQDPSGQVKLIDGRTGEYFDRLVTVGQKYLLKLHHLVDNKIHSRSIGPYSLVTQQPLGGKSHFGGQRFGEMECWALQAYGAAYTLQEMLTVKSDDVNGRIKTYDSIVRGENNFESGIPESFNVMIKEFRSLCLNVKLEVTSS</sequence>
<proteinExistence type="inferred from homology"/>
<reference key="1">
    <citation type="submission" date="2007-09" db="EMBL/GenBank/DDBJ databases">
        <title>Complete genome sequence of Rickettsia akari.</title>
        <authorList>
            <person name="Madan A."/>
            <person name="Fahey J."/>
            <person name="Helton E."/>
            <person name="Ketteman M."/>
            <person name="Madan A."/>
            <person name="Rodrigues S."/>
            <person name="Sanchez A."/>
            <person name="Whiting M."/>
            <person name="Dasch G."/>
            <person name="Eremeeva M."/>
        </authorList>
    </citation>
    <scope>NUCLEOTIDE SEQUENCE [LARGE SCALE GENOMIC DNA]</scope>
    <source>
        <strain>Hartford</strain>
    </source>
</reference>
<gene>
    <name evidence="1" type="primary">rpoB</name>
    <name type="ordered locus">A1C_01010</name>
</gene>
<accession>A8GMA7</accession>
<keyword id="KW-0240">DNA-directed RNA polymerase</keyword>
<keyword id="KW-0548">Nucleotidyltransferase</keyword>
<keyword id="KW-0804">Transcription</keyword>
<keyword id="KW-0808">Transferase</keyword>
<dbReference type="EC" id="2.7.7.6" evidence="1"/>
<dbReference type="EMBL" id="CP000847">
    <property type="protein sequence ID" value="ABV74532.1"/>
    <property type="molecule type" value="Genomic_DNA"/>
</dbReference>
<dbReference type="RefSeq" id="WP_012013402.1">
    <property type="nucleotide sequence ID" value="NC_009881.1"/>
</dbReference>
<dbReference type="SMR" id="A8GMA7"/>
<dbReference type="STRING" id="293614.A1C_01010"/>
<dbReference type="KEGG" id="rak:A1C_01010"/>
<dbReference type="eggNOG" id="COG0085">
    <property type="taxonomic scope" value="Bacteria"/>
</dbReference>
<dbReference type="HOGENOM" id="CLU_000524_4_0_5"/>
<dbReference type="Proteomes" id="UP000006830">
    <property type="component" value="Chromosome"/>
</dbReference>
<dbReference type="GO" id="GO:0000428">
    <property type="term" value="C:DNA-directed RNA polymerase complex"/>
    <property type="evidence" value="ECO:0007669"/>
    <property type="project" value="UniProtKB-KW"/>
</dbReference>
<dbReference type="GO" id="GO:0003677">
    <property type="term" value="F:DNA binding"/>
    <property type="evidence" value="ECO:0007669"/>
    <property type="project" value="UniProtKB-UniRule"/>
</dbReference>
<dbReference type="GO" id="GO:0003899">
    <property type="term" value="F:DNA-directed RNA polymerase activity"/>
    <property type="evidence" value="ECO:0007669"/>
    <property type="project" value="UniProtKB-UniRule"/>
</dbReference>
<dbReference type="GO" id="GO:0032549">
    <property type="term" value="F:ribonucleoside binding"/>
    <property type="evidence" value="ECO:0007669"/>
    <property type="project" value="InterPro"/>
</dbReference>
<dbReference type="GO" id="GO:0006351">
    <property type="term" value="P:DNA-templated transcription"/>
    <property type="evidence" value="ECO:0007669"/>
    <property type="project" value="UniProtKB-UniRule"/>
</dbReference>
<dbReference type="CDD" id="cd00653">
    <property type="entry name" value="RNA_pol_B_RPB2"/>
    <property type="match status" value="1"/>
</dbReference>
<dbReference type="Gene3D" id="2.40.50.100">
    <property type="match status" value="1"/>
</dbReference>
<dbReference type="Gene3D" id="2.40.50.150">
    <property type="match status" value="1"/>
</dbReference>
<dbReference type="Gene3D" id="3.90.1100.10">
    <property type="match status" value="2"/>
</dbReference>
<dbReference type="Gene3D" id="2.30.150.10">
    <property type="entry name" value="DNA-directed RNA polymerase, beta subunit, external 1 domain"/>
    <property type="match status" value="1"/>
</dbReference>
<dbReference type="Gene3D" id="2.40.270.10">
    <property type="entry name" value="DNA-directed RNA polymerase, subunit 2, domain 6"/>
    <property type="match status" value="2"/>
</dbReference>
<dbReference type="Gene3D" id="3.90.1800.10">
    <property type="entry name" value="RNA polymerase alpha subunit dimerisation domain"/>
    <property type="match status" value="1"/>
</dbReference>
<dbReference type="Gene3D" id="3.90.1110.10">
    <property type="entry name" value="RNA polymerase Rpb2, domain 2"/>
    <property type="match status" value="2"/>
</dbReference>
<dbReference type="HAMAP" id="MF_01321">
    <property type="entry name" value="RNApol_bact_RpoB"/>
    <property type="match status" value="1"/>
</dbReference>
<dbReference type="InterPro" id="IPR042107">
    <property type="entry name" value="DNA-dir_RNA_pol_bsu_ext_1_sf"/>
</dbReference>
<dbReference type="InterPro" id="IPR019462">
    <property type="entry name" value="DNA-dir_RNA_pol_bsu_external_1"/>
</dbReference>
<dbReference type="InterPro" id="IPR015712">
    <property type="entry name" value="DNA-dir_RNA_pol_su2"/>
</dbReference>
<dbReference type="InterPro" id="IPR007120">
    <property type="entry name" value="DNA-dir_RNAP_su2_dom"/>
</dbReference>
<dbReference type="InterPro" id="IPR037033">
    <property type="entry name" value="DNA-dir_RNAP_su2_hyb_sf"/>
</dbReference>
<dbReference type="InterPro" id="IPR010243">
    <property type="entry name" value="RNA_pol_bsu_bac"/>
</dbReference>
<dbReference type="InterPro" id="IPR007121">
    <property type="entry name" value="RNA_pol_bsu_CS"/>
</dbReference>
<dbReference type="InterPro" id="IPR007644">
    <property type="entry name" value="RNA_pol_bsu_protrusion"/>
</dbReference>
<dbReference type="InterPro" id="IPR007642">
    <property type="entry name" value="RNA_pol_Rpb2_2"/>
</dbReference>
<dbReference type="InterPro" id="IPR037034">
    <property type="entry name" value="RNA_pol_Rpb2_2_sf"/>
</dbReference>
<dbReference type="InterPro" id="IPR007645">
    <property type="entry name" value="RNA_pol_Rpb2_3"/>
</dbReference>
<dbReference type="InterPro" id="IPR007641">
    <property type="entry name" value="RNA_pol_Rpb2_7"/>
</dbReference>
<dbReference type="InterPro" id="IPR014724">
    <property type="entry name" value="RNA_pol_RPB2_OB-fold"/>
</dbReference>
<dbReference type="NCBIfam" id="NF001616">
    <property type="entry name" value="PRK00405.1"/>
    <property type="match status" value="1"/>
</dbReference>
<dbReference type="NCBIfam" id="TIGR02013">
    <property type="entry name" value="rpoB"/>
    <property type="match status" value="1"/>
</dbReference>
<dbReference type="PANTHER" id="PTHR20856">
    <property type="entry name" value="DNA-DIRECTED RNA POLYMERASE I SUBUNIT 2"/>
    <property type="match status" value="1"/>
</dbReference>
<dbReference type="Pfam" id="PF04563">
    <property type="entry name" value="RNA_pol_Rpb2_1"/>
    <property type="match status" value="1"/>
</dbReference>
<dbReference type="Pfam" id="PF04561">
    <property type="entry name" value="RNA_pol_Rpb2_2"/>
    <property type="match status" value="1"/>
</dbReference>
<dbReference type="Pfam" id="PF04565">
    <property type="entry name" value="RNA_pol_Rpb2_3"/>
    <property type="match status" value="1"/>
</dbReference>
<dbReference type="Pfam" id="PF10385">
    <property type="entry name" value="RNA_pol_Rpb2_45"/>
    <property type="match status" value="1"/>
</dbReference>
<dbReference type="Pfam" id="PF00562">
    <property type="entry name" value="RNA_pol_Rpb2_6"/>
    <property type="match status" value="1"/>
</dbReference>
<dbReference type="Pfam" id="PF04560">
    <property type="entry name" value="RNA_pol_Rpb2_7"/>
    <property type="match status" value="1"/>
</dbReference>
<dbReference type="SUPFAM" id="SSF64484">
    <property type="entry name" value="beta and beta-prime subunits of DNA dependent RNA-polymerase"/>
    <property type="match status" value="1"/>
</dbReference>
<dbReference type="PROSITE" id="PS01166">
    <property type="entry name" value="RNA_POL_BETA"/>
    <property type="match status" value="1"/>
</dbReference>
<organism>
    <name type="scientific">Rickettsia akari (strain Hartford)</name>
    <dbReference type="NCBI Taxonomy" id="293614"/>
    <lineage>
        <taxon>Bacteria</taxon>
        <taxon>Pseudomonadati</taxon>
        <taxon>Pseudomonadota</taxon>
        <taxon>Alphaproteobacteria</taxon>
        <taxon>Rickettsiales</taxon>
        <taxon>Rickettsiaceae</taxon>
        <taxon>Rickettsieae</taxon>
        <taxon>Rickettsia</taxon>
        <taxon>spotted fever group</taxon>
    </lineage>
</organism>
<name>RPOB_RICAH</name>
<feature type="chain" id="PRO_1000051977" description="DNA-directed RNA polymerase subunit beta">
    <location>
        <begin position="1"/>
        <end position="1373"/>
    </location>
</feature>
<comment type="function">
    <text evidence="1">DNA-dependent RNA polymerase catalyzes the transcription of DNA into RNA using the four ribonucleoside triphosphates as substrates.</text>
</comment>
<comment type="catalytic activity">
    <reaction evidence="1">
        <text>RNA(n) + a ribonucleoside 5'-triphosphate = RNA(n+1) + diphosphate</text>
        <dbReference type="Rhea" id="RHEA:21248"/>
        <dbReference type="Rhea" id="RHEA-COMP:14527"/>
        <dbReference type="Rhea" id="RHEA-COMP:17342"/>
        <dbReference type="ChEBI" id="CHEBI:33019"/>
        <dbReference type="ChEBI" id="CHEBI:61557"/>
        <dbReference type="ChEBI" id="CHEBI:140395"/>
        <dbReference type="EC" id="2.7.7.6"/>
    </reaction>
</comment>
<comment type="subunit">
    <text evidence="1">The RNAP catalytic core consists of 2 alpha, 1 beta, 1 beta' and 1 omega subunit. When a sigma factor is associated with the core the holoenzyme is formed, which can initiate transcription.</text>
</comment>
<comment type="similarity">
    <text evidence="1">Belongs to the RNA polymerase beta chain family.</text>
</comment>
<protein>
    <recommendedName>
        <fullName evidence="1">DNA-directed RNA polymerase subunit beta</fullName>
        <shortName evidence="1">RNAP subunit beta</shortName>
        <ecNumber evidence="1">2.7.7.6</ecNumber>
    </recommendedName>
    <alternativeName>
        <fullName evidence="1">RNA polymerase subunit beta</fullName>
    </alternativeName>
    <alternativeName>
        <fullName evidence="1">Transcriptase subunit beta</fullName>
    </alternativeName>
</protein>